<accession>Q54C80</accession>
<gene>
    <name type="primary">expl8</name>
    <name type="ORF">DDB_G0293182</name>
</gene>
<keyword id="KW-1015">Disulfide bond</keyword>
<keyword id="KW-0325">Glycoprotein</keyword>
<keyword id="KW-0472">Membrane</keyword>
<keyword id="KW-1185">Reference proteome</keyword>
<keyword id="KW-0732">Signal</keyword>
<keyword id="KW-0812">Transmembrane</keyword>
<keyword id="KW-1133">Transmembrane helix</keyword>
<organism>
    <name type="scientific">Dictyostelium discoideum</name>
    <name type="common">Social amoeba</name>
    <dbReference type="NCBI Taxonomy" id="44689"/>
    <lineage>
        <taxon>Eukaryota</taxon>
        <taxon>Amoebozoa</taxon>
        <taxon>Evosea</taxon>
        <taxon>Eumycetozoa</taxon>
        <taxon>Dictyostelia</taxon>
        <taxon>Dictyosteliales</taxon>
        <taxon>Dictyosteliaceae</taxon>
        <taxon>Dictyostelium</taxon>
    </lineage>
</organism>
<proteinExistence type="inferred from homology"/>
<comment type="function">
    <text evidence="1">May serve to lubricate the movement of the cellulose microfibrils during cell growth and wall extension and/or may serve to maintain the fluid state of the slug cell wall.</text>
</comment>
<comment type="subcellular location">
    <subcellularLocation>
        <location evidence="5">Membrane</location>
        <topology evidence="5">Single-pass type I membrane protein</topology>
    </subcellularLocation>
</comment>
<comment type="similarity">
    <text evidence="5">Belongs to the expansin family. Expansin A subfamily.</text>
</comment>
<reference key="1">
    <citation type="journal article" date="2005" name="Nature">
        <title>The genome of the social amoeba Dictyostelium discoideum.</title>
        <authorList>
            <person name="Eichinger L."/>
            <person name="Pachebat J.A."/>
            <person name="Gloeckner G."/>
            <person name="Rajandream M.A."/>
            <person name="Sucgang R."/>
            <person name="Berriman M."/>
            <person name="Song J."/>
            <person name="Olsen R."/>
            <person name="Szafranski K."/>
            <person name="Xu Q."/>
            <person name="Tunggal B."/>
            <person name="Kummerfeld S."/>
            <person name="Madera M."/>
            <person name="Konfortov B.A."/>
            <person name="Rivero F."/>
            <person name="Bankier A.T."/>
            <person name="Lehmann R."/>
            <person name="Hamlin N."/>
            <person name="Davies R."/>
            <person name="Gaudet P."/>
            <person name="Fey P."/>
            <person name="Pilcher K."/>
            <person name="Chen G."/>
            <person name="Saunders D."/>
            <person name="Sodergren E.J."/>
            <person name="Davis P."/>
            <person name="Kerhornou A."/>
            <person name="Nie X."/>
            <person name="Hall N."/>
            <person name="Anjard C."/>
            <person name="Hemphill L."/>
            <person name="Bason N."/>
            <person name="Farbrother P."/>
            <person name="Desany B."/>
            <person name="Just E."/>
            <person name="Morio T."/>
            <person name="Rost R."/>
            <person name="Churcher C.M."/>
            <person name="Cooper J."/>
            <person name="Haydock S."/>
            <person name="van Driessche N."/>
            <person name="Cronin A."/>
            <person name="Goodhead I."/>
            <person name="Muzny D.M."/>
            <person name="Mourier T."/>
            <person name="Pain A."/>
            <person name="Lu M."/>
            <person name="Harper D."/>
            <person name="Lindsay R."/>
            <person name="Hauser H."/>
            <person name="James K.D."/>
            <person name="Quiles M."/>
            <person name="Madan Babu M."/>
            <person name="Saito T."/>
            <person name="Buchrieser C."/>
            <person name="Wardroper A."/>
            <person name="Felder M."/>
            <person name="Thangavelu M."/>
            <person name="Johnson D."/>
            <person name="Knights A."/>
            <person name="Loulseged H."/>
            <person name="Mungall K.L."/>
            <person name="Oliver K."/>
            <person name="Price C."/>
            <person name="Quail M.A."/>
            <person name="Urushihara H."/>
            <person name="Hernandez J."/>
            <person name="Rabbinowitsch E."/>
            <person name="Steffen D."/>
            <person name="Sanders M."/>
            <person name="Ma J."/>
            <person name="Kohara Y."/>
            <person name="Sharp S."/>
            <person name="Simmonds M.N."/>
            <person name="Spiegler S."/>
            <person name="Tivey A."/>
            <person name="Sugano S."/>
            <person name="White B."/>
            <person name="Walker D."/>
            <person name="Woodward J.R."/>
            <person name="Winckler T."/>
            <person name="Tanaka Y."/>
            <person name="Shaulsky G."/>
            <person name="Schleicher M."/>
            <person name="Weinstock G.M."/>
            <person name="Rosenthal A."/>
            <person name="Cox E.C."/>
            <person name="Chisholm R.L."/>
            <person name="Gibbs R.A."/>
            <person name="Loomis W.F."/>
            <person name="Platzer M."/>
            <person name="Kay R.R."/>
            <person name="Williams J.G."/>
            <person name="Dear P.H."/>
            <person name="Noegel A.A."/>
            <person name="Barrell B.G."/>
            <person name="Kuspa A."/>
        </authorList>
    </citation>
    <scope>NUCLEOTIDE SEQUENCE [LARGE SCALE GENOMIC DNA]</scope>
    <source>
        <strain>AX4</strain>
    </source>
</reference>
<reference key="2">
    <citation type="journal article" date="2009" name="Dev. Growth Differ.">
        <title>Role of an expansin-like molecule in Dictyostelium morphogenesis and regulation of its gene expression by the signal transducer and activator of transcription protein Dd-STATa.</title>
        <authorList>
            <person name="Ogasawara S."/>
            <person name="Shimada N."/>
            <person name="Kawata T."/>
        </authorList>
    </citation>
    <scope>IDENTIFICATION</scope>
</reference>
<evidence type="ECO:0000250" key="1"/>
<evidence type="ECO:0000255" key="2"/>
<evidence type="ECO:0000255" key="3">
    <source>
        <dbReference type="PROSITE-ProRule" id="PRU00079"/>
    </source>
</evidence>
<evidence type="ECO:0000256" key="4">
    <source>
        <dbReference type="SAM" id="MobiDB-lite"/>
    </source>
</evidence>
<evidence type="ECO:0000305" key="5"/>
<protein>
    <recommendedName>
        <fullName>Expansin-like protein 8</fullName>
        <shortName>Ddexpl8</shortName>
    </recommendedName>
</protein>
<name>EXPL8_DICDI</name>
<sequence>MRISIILLSLLFLSLHSLIKADITKLSVCGSARAVPTATQNPKPTCVNVNSQGIPTAGLNSAAFDNGVRCGQCYELTGPLGKTVVMVADVCDAGSACTQSDLFNFIIPNEEFDKIGNRSDYGNIFSLCYQIVSCGYSGNVQGVFTGPSSSPNTFTYFLSVVFSNNNVAIKKVLIKGLSWPLYESLTGQNGNWKWNKNSYELQFPATLYITSNTGETITYKMNSRPITNQPIDLDFQFNPKAISSLENNECSMALLPQYIYQDGLSYGWVDSQSFNYAKFTDKSSDTKSGSGTCINAQLDGHGGVKFTREGDFQTSYLDKLSFDIKTSADSSSFAVYFGDVATKNIDPLVASTWTTVELSVKSLTNNTVEGSITFFNNQADPINIWLDNIKWTYTDDAPLDQPTMDLIEVNNKPSTTSGTGTTSSKPSSSSGGVSGGGIGSESSIYGLSSENQENQSGHHASSNTNILLPTTFVFFISITILSLLF</sequence>
<feature type="signal peptide" evidence="2">
    <location>
        <begin position="1"/>
        <end position="21"/>
    </location>
</feature>
<feature type="chain" id="PRO_0000383953" description="Expansin-like protein 8">
    <location>
        <begin position="22"/>
        <end position="485"/>
    </location>
</feature>
<feature type="topological domain" description="Extracellular" evidence="2">
    <location>
        <begin position="22"/>
        <end position="464"/>
    </location>
</feature>
<feature type="transmembrane region" description="Helical" evidence="2">
    <location>
        <begin position="465"/>
        <end position="485"/>
    </location>
</feature>
<feature type="domain" description="Expansin-like EG45" evidence="3">
    <location>
        <begin position="26"/>
        <end position="139"/>
    </location>
</feature>
<feature type="region of interest" description="Disordered" evidence="4">
    <location>
        <begin position="408"/>
        <end position="436"/>
    </location>
</feature>
<feature type="compositionally biased region" description="Low complexity" evidence="4">
    <location>
        <begin position="414"/>
        <end position="431"/>
    </location>
</feature>
<feature type="glycosylation site" description="N-linked (GlcNAc...) asparagine" evidence="2">
    <location>
        <position position="117"/>
    </location>
</feature>
<feature type="glycosylation site" description="N-linked (GlcNAc...) asparagine" evidence="2">
    <location>
        <position position="365"/>
    </location>
</feature>
<feature type="glycosylation site" description="N-linked (GlcNAc...) asparagine" evidence="2">
    <location>
        <position position="454"/>
    </location>
</feature>
<feature type="disulfide bond" evidence="3">
    <location>
        <begin position="29"/>
        <end position="70"/>
    </location>
</feature>
<feature type="disulfide bond" evidence="3">
    <location>
        <begin position="73"/>
        <end position="134"/>
    </location>
</feature>
<dbReference type="EMBL" id="AAFI02000199">
    <property type="protein sequence ID" value="EAL60943.1"/>
    <property type="molecule type" value="Genomic_DNA"/>
</dbReference>
<dbReference type="RefSeq" id="XP_629339.1">
    <property type="nucleotide sequence ID" value="XM_629337.1"/>
</dbReference>
<dbReference type="SMR" id="Q54C80"/>
<dbReference type="FunCoup" id="Q54C80">
    <property type="interactions" value="62"/>
</dbReference>
<dbReference type="STRING" id="44689.Q54C80"/>
<dbReference type="GlyCosmos" id="Q54C80">
    <property type="glycosylation" value="3 sites, No reported glycans"/>
</dbReference>
<dbReference type="GlyGen" id="Q54C80">
    <property type="glycosylation" value="3 sites"/>
</dbReference>
<dbReference type="PaxDb" id="44689-DDB0304867"/>
<dbReference type="EnsemblProtists" id="EAL60943">
    <property type="protein sequence ID" value="EAL60943"/>
    <property type="gene ID" value="DDB_G0293182"/>
</dbReference>
<dbReference type="GeneID" id="8629063"/>
<dbReference type="KEGG" id="ddi:DDB_G0293182"/>
<dbReference type="dictyBase" id="DDB_G0293182">
    <property type="gene designation" value="expl8"/>
</dbReference>
<dbReference type="VEuPathDB" id="AmoebaDB:DDB_G0293182"/>
<dbReference type="HOGENOM" id="CLU_038219_0_0_1"/>
<dbReference type="InParanoid" id="Q54C80"/>
<dbReference type="OMA" id="ADPINIW"/>
<dbReference type="PhylomeDB" id="Q54C80"/>
<dbReference type="PRO" id="PR:Q54C80"/>
<dbReference type="Proteomes" id="UP000002195">
    <property type="component" value="Chromosome 6"/>
</dbReference>
<dbReference type="GO" id="GO:0016020">
    <property type="term" value="C:membrane"/>
    <property type="evidence" value="ECO:0007669"/>
    <property type="project" value="UniProtKB-SubCell"/>
</dbReference>
<dbReference type="CDD" id="cd22271">
    <property type="entry name" value="DPBB_EXP_N-like"/>
    <property type="match status" value="1"/>
</dbReference>
<dbReference type="Gene3D" id="2.40.40.10">
    <property type="entry name" value="RlpA-like domain"/>
    <property type="match status" value="1"/>
</dbReference>
<dbReference type="InterPro" id="IPR007112">
    <property type="entry name" value="Expansin/allergen_DPBB_dom"/>
</dbReference>
<dbReference type="InterPro" id="IPR051477">
    <property type="entry name" value="Expansin_CellWall"/>
</dbReference>
<dbReference type="InterPro" id="IPR008979">
    <property type="entry name" value="Galactose-bd-like_sf"/>
</dbReference>
<dbReference type="InterPro" id="IPR036908">
    <property type="entry name" value="RlpA-like_sf"/>
</dbReference>
<dbReference type="PANTHER" id="PTHR31836">
    <property type="match status" value="1"/>
</dbReference>
<dbReference type="PANTHER" id="PTHR31836:SF11">
    <property type="entry name" value="EXPANSIN-LIKE PROTEIN 8-RELATED"/>
    <property type="match status" value="1"/>
</dbReference>
<dbReference type="SUPFAM" id="SSF50685">
    <property type="entry name" value="Barwin-like endoglucanases"/>
    <property type="match status" value="1"/>
</dbReference>
<dbReference type="SUPFAM" id="SSF49785">
    <property type="entry name" value="Galactose-binding domain-like"/>
    <property type="match status" value="1"/>
</dbReference>
<dbReference type="PROSITE" id="PS50842">
    <property type="entry name" value="EXPANSIN_EG45"/>
    <property type="match status" value="1"/>
</dbReference>